<reference key="1">
    <citation type="journal article" date="1997" name="Genome Res.">
        <title>A 1.1-Mb transcript map of the hereditary hemochromatosis locus.</title>
        <authorList>
            <person name="Ruddy D.A."/>
            <person name="Kronmal G.S."/>
            <person name="Lee V.K."/>
            <person name="Mintier G.A."/>
            <person name="Quintana L."/>
            <person name="Domingo R. Jr."/>
            <person name="Meyer N.C."/>
            <person name="Irrinki A."/>
            <person name="McClelland E.E."/>
            <person name="Fullan A."/>
            <person name="Mapa F.A."/>
            <person name="Moore T."/>
            <person name="Thomas W."/>
            <person name="Loeb D.B."/>
            <person name="Harmon C."/>
            <person name="Tsuchihashi Z."/>
            <person name="Wolff R.K."/>
            <person name="Schatzman R.C."/>
            <person name="Feder J.N."/>
        </authorList>
    </citation>
    <scope>NUCLEOTIDE SEQUENCE [MRNA] (ISOFORM 1)</scope>
    <scope>TISSUE SPECIFICITY</scope>
</reference>
<reference key="2">
    <citation type="journal article" date="2004" name="Nat. Genet.">
        <title>Complete sequencing and characterization of 21,243 full-length human cDNAs.</title>
        <authorList>
            <person name="Ota T."/>
            <person name="Suzuki Y."/>
            <person name="Nishikawa T."/>
            <person name="Otsuki T."/>
            <person name="Sugiyama T."/>
            <person name="Irie R."/>
            <person name="Wakamatsu A."/>
            <person name="Hayashi K."/>
            <person name="Sato H."/>
            <person name="Nagai K."/>
            <person name="Kimura K."/>
            <person name="Makita H."/>
            <person name="Sekine M."/>
            <person name="Obayashi M."/>
            <person name="Nishi T."/>
            <person name="Shibahara T."/>
            <person name="Tanaka T."/>
            <person name="Ishii S."/>
            <person name="Yamamoto J."/>
            <person name="Saito K."/>
            <person name="Kawai Y."/>
            <person name="Isono Y."/>
            <person name="Nakamura Y."/>
            <person name="Nagahari K."/>
            <person name="Murakami K."/>
            <person name="Yasuda T."/>
            <person name="Iwayanagi T."/>
            <person name="Wagatsuma M."/>
            <person name="Shiratori A."/>
            <person name="Sudo H."/>
            <person name="Hosoiri T."/>
            <person name="Kaku Y."/>
            <person name="Kodaira H."/>
            <person name="Kondo H."/>
            <person name="Sugawara M."/>
            <person name="Takahashi M."/>
            <person name="Kanda K."/>
            <person name="Yokoi T."/>
            <person name="Furuya T."/>
            <person name="Kikkawa E."/>
            <person name="Omura Y."/>
            <person name="Abe K."/>
            <person name="Kamihara K."/>
            <person name="Katsuta N."/>
            <person name="Sato K."/>
            <person name="Tanikawa M."/>
            <person name="Yamazaki M."/>
            <person name="Ninomiya K."/>
            <person name="Ishibashi T."/>
            <person name="Yamashita H."/>
            <person name="Murakawa K."/>
            <person name="Fujimori K."/>
            <person name="Tanai H."/>
            <person name="Kimata M."/>
            <person name="Watanabe M."/>
            <person name="Hiraoka S."/>
            <person name="Chiba Y."/>
            <person name="Ishida S."/>
            <person name="Ono Y."/>
            <person name="Takiguchi S."/>
            <person name="Watanabe S."/>
            <person name="Yosida M."/>
            <person name="Hotuta T."/>
            <person name="Kusano J."/>
            <person name="Kanehori K."/>
            <person name="Takahashi-Fujii A."/>
            <person name="Hara H."/>
            <person name="Tanase T.-O."/>
            <person name="Nomura Y."/>
            <person name="Togiya S."/>
            <person name="Komai F."/>
            <person name="Hara R."/>
            <person name="Takeuchi K."/>
            <person name="Arita M."/>
            <person name="Imose N."/>
            <person name="Musashino K."/>
            <person name="Yuuki H."/>
            <person name="Oshima A."/>
            <person name="Sasaki N."/>
            <person name="Aotsuka S."/>
            <person name="Yoshikawa Y."/>
            <person name="Matsunawa H."/>
            <person name="Ichihara T."/>
            <person name="Shiohata N."/>
            <person name="Sano S."/>
            <person name="Moriya S."/>
            <person name="Momiyama H."/>
            <person name="Satoh N."/>
            <person name="Takami S."/>
            <person name="Terashima Y."/>
            <person name="Suzuki O."/>
            <person name="Nakagawa S."/>
            <person name="Senoh A."/>
            <person name="Mizoguchi H."/>
            <person name="Goto Y."/>
            <person name="Shimizu F."/>
            <person name="Wakebe H."/>
            <person name="Hishigaki H."/>
            <person name="Watanabe T."/>
            <person name="Sugiyama A."/>
            <person name="Takemoto M."/>
            <person name="Kawakami B."/>
            <person name="Yamazaki M."/>
            <person name="Watanabe K."/>
            <person name="Kumagai A."/>
            <person name="Itakura S."/>
            <person name="Fukuzumi Y."/>
            <person name="Fujimori Y."/>
            <person name="Komiyama M."/>
            <person name="Tashiro H."/>
            <person name="Tanigami A."/>
            <person name="Fujiwara T."/>
            <person name="Ono T."/>
            <person name="Yamada K."/>
            <person name="Fujii Y."/>
            <person name="Ozaki K."/>
            <person name="Hirao M."/>
            <person name="Ohmori Y."/>
            <person name="Kawabata A."/>
            <person name="Hikiji T."/>
            <person name="Kobatake N."/>
            <person name="Inagaki H."/>
            <person name="Ikema Y."/>
            <person name="Okamoto S."/>
            <person name="Okitani R."/>
            <person name="Kawakami T."/>
            <person name="Noguchi S."/>
            <person name="Itoh T."/>
            <person name="Shigeta K."/>
            <person name="Senba T."/>
            <person name="Matsumura K."/>
            <person name="Nakajima Y."/>
            <person name="Mizuno T."/>
            <person name="Morinaga M."/>
            <person name="Sasaki M."/>
            <person name="Togashi T."/>
            <person name="Oyama M."/>
            <person name="Hata H."/>
            <person name="Watanabe M."/>
            <person name="Komatsu T."/>
            <person name="Mizushima-Sugano J."/>
            <person name="Satoh T."/>
            <person name="Shirai Y."/>
            <person name="Takahashi Y."/>
            <person name="Nakagawa K."/>
            <person name="Okumura K."/>
            <person name="Nagase T."/>
            <person name="Nomura N."/>
            <person name="Kikuchi H."/>
            <person name="Masuho Y."/>
            <person name="Yamashita R."/>
            <person name="Nakai K."/>
            <person name="Yada T."/>
            <person name="Nakamura Y."/>
            <person name="Ohara O."/>
            <person name="Isogai T."/>
            <person name="Sugano S."/>
        </authorList>
    </citation>
    <scope>NUCLEOTIDE SEQUENCE [LARGE SCALE MRNA] (ISOFORMS 3; 4 AND 5)</scope>
    <source>
        <tissue>Caudate nucleus</tissue>
        <tissue>Cerebellum</tissue>
    </source>
</reference>
<reference key="3">
    <citation type="journal article" date="2003" name="Nature">
        <title>The DNA sequence and analysis of human chromosome 6.</title>
        <authorList>
            <person name="Mungall A.J."/>
            <person name="Palmer S.A."/>
            <person name="Sims S.K."/>
            <person name="Edwards C.A."/>
            <person name="Ashurst J.L."/>
            <person name="Wilming L."/>
            <person name="Jones M.C."/>
            <person name="Horton R."/>
            <person name="Hunt S.E."/>
            <person name="Scott C.E."/>
            <person name="Gilbert J.G.R."/>
            <person name="Clamp M.E."/>
            <person name="Bethel G."/>
            <person name="Milne S."/>
            <person name="Ainscough R."/>
            <person name="Almeida J.P."/>
            <person name="Ambrose K.D."/>
            <person name="Andrews T.D."/>
            <person name="Ashwell R.I.S."/>
            <person name="Babbage A.K."/>
            <person name="Bagguley C.L."/>
            <person name="Bailey J."/>
            <person name="Banerjee R."/>
            <person name="Barker D.J."/>
            <person name="Barlow K.F."/>
            <person name="Bates K."/>
            <person name="Beare D.M."/>
            <person name="Beasley H."/>
            <person name="Beasley O."/>
            <person name="Bird C.P."/>
            <person name="Blakey S.E."/>
            <person name="Bray-Allen S."/>
            <person name="Brook J."/>
            <person name="Brown A.J."/>
            <person name="Brown J.Y."/>
            <person name="Burford D.C."/>
            <person name="Burrill W."/>
            <person name="Burton J."/>
            <person name="Carder C."/>
            <person name="Carter N.P."/>
            <person name="Chapman J.C."/>
            <person name="Clark S.Y."/>
            <person name="Clark G."/>
            <person name="Clee C.M."/>
            <person name="Clegg S."/>
            <person name="Cobley V."/>
            <person name="Collier R.E."/>
            <person name="Collins J.E."/>
            <person name="Colman L.K."/>
            <person name="Corby N.R."/>
            <person name="Coville G.J."/>
            <person name="Culley K.M."/>
            <person name="Dhami P."/>
            <person name="Davies J."/>
            <person name="Dunn M."/>
            <person name="Earthrowl M.E."/>
            <person name="Ellington A.E."/>
            <person name="Evans K.A."/>
            <person name="Faulkner L."/>
            <person name="Francis M.D."/>
            <person name="Frankish A."/>
            <person name="Frankland J."/>
            <person name="French L."/>
            <person name="Garner P."/>
            <person name="Garnett J."/>
            <person name="Ghori M.J."/>
            <person name="Gilby L.M."/>
            <person name="Gillson C.J."/>
            <person name="Glithero R.J."/>
            <person name="Grafham D.V."/>
            <person name="Grant M."/>
            <person name="Gribble S."/>
            <person name="Griffiths C."/>
            <person name="Griffiths M.N.D."/>
            <person name="Hall R."/>
            <person name="Halls K.S."/>
            <person name="Hammond S."/>
            <person name="Harley J.L."/>
            <person name="Hart E.A."/>
            <person name="Heath P.D."/>
            <person name="Heathcott R."/>
            <person name="Holmes S.J."/>
            <person name="Howden P.J."/>
            <person name="Howe K.L."/>
            <person name="Howell G.R."/>
            <person name="Huckle E."/>
            <person name="Humphray S.J."/>
            <person name="Humphries M.D."/>
            <person name="Hunt A.R."/>
            <person name="Johnson C.M."/>
            <person name="Joy A.A."/>
            <person name="Kay M."/>
            <person name="Keenan S.J."/>
            <person name="Kimberley A.M."/>
            <person name="King A."/>
            <person name="Laird G.K."/>
            <person name="Langford C."/>
            <person name="Lawlor S."/>
            <person name="Leongamornlert D.A."/>
            <person name="Leversha M."/>
            <person name="Lloyd C.R."/>
            <person name="Lloyd D.M."/>
            <person name="Loveland J.E."/>
            <person name="Lovell J."/>
            <person name="Martin S."/>
            <person name="Mashreghi-Mohammadi M."/>
            <person name="Maslen G.L."/>
            <person name="Matthews L."/>
            <person name="McCann O.T."/>
            <person name="McLaren S.J."/>
            <person name="McLay K."/>
            <person name="McMurray A."/>
            <person name="Moore M.J.F."/>
            <person name="Mullikin J.C."/>
            <person name="Niblett D."/>
            <person name="Nickerson T."/>
            <person name="Novik K.L."/>
            <person name="Oliver K."/>
            <person name="Overton-Larty E.K."/>
            <person name="Parker A."/>
            <person name="Patel R."/>
            <person name="Pearce A.V."/>
            <person name="Peck A.I."/>
            <person name="Phillimore B.J.C.T."/>
            <person name="Phillips S."/>
            <person name="Plumb R.W."/>
            <person name="Porter K.M."/>
            <person name="Ramsey Y."/>
            <person name="Ranby S.A."/>
            <person name="Rice C.M."/>
            <person name="Ross M.T."/>
            <person name="Searle S.M."/>
            <person name="Sehra H.K."/>
            <person name="Sheridan E."/>
            <person name="Skuce C.D."/>
            <person name="Smith S."/>
            <person name="Smith M."/>
            <person name="Spraggon L."/>
            <person name="Squares S.L."/>
            <person name="Steward C.A."/>
            <person name="Sycamore N."/>
            <person name="Tamlyn-Hall G."/>
            <person name="Tester J."/>
            <person name="Theaker A.J."/>
            <person name="Thomas D.W."/>
            <person name="Thorpe A."/>
            <person name="Tracey A."/>
            <person name="Tromans A."/>
            <person name="Tubby B."/>
            <person name="Wall M."/>
            <person name="Wallis J.M."/>
            <person name="West A.P."/>
            <person name="White S.S."/>
            <person name="Whitehead S.L."/>
            <person name="Whittaker H."/>
            <person name="Wild A."/>
            <person name="Willey D.J."/>
            <person name="Wilmer T.E."/>
            <person name="Wood J.M."/>
            <person name="Wray P.W."/>
            <person name="Wyatt J.C."/>
            <person name="Young L."/>
            <person name="Younger R.M."/>
            <person name="Bentley D.R."/>
            <person name="Coulson A."/>
            <person name="Durbin R.M."/>
            <person name="Hubbard T."/>
            <person name="Sulston J.E."/>
            <person name="Dunham I."/>
            <person name="Rogers J."/>
            <person name="Beck S."/>
        </authorList>
    </citation>
    <scope>NUCLEOTIDE SEQUENCE [LARGE SCALE GENOMIC DNA]</scope>
</reference>
<reference key="4">
    <citation type="submission" date="2005-07" db="EMBL/GenBank/DDBJ databases">
        <authorList>
            <person name="Mural R.J."/>
            <person name="Istrail S."/>
            <person name="Sutton G."/>
            <person name="Florea L."/>
            <person name="Halpern A.L."/>
            <person name="Mobarry C.M."/>
            <person name="Lippert R."/>
            <person name="Walenz B."/>
            <person name="Shatkay H."/>
            <person name="Dew I."/>
            <person name="Miller J.R."/>
            <person name="Flanigan M.J."/>
            <person name="Edwards N.J."/>
            <person name="Bolanos R."/>
            <person name="Fasulo D."/>
            <person name="Halldorsson B.V."/>
            <person name="Hannenhalli S."/>
            <person name="Turner R."/>
            <person name="Yooseph S."/>
            <person name="Lu F."/>
            <person name="Nusskern D.R."/>
            <person name="Shue B.C."/>
            <person name="Zheng X.H."/>
            <person name="Zhong F."/>
            <person name="Delcher A.L."/>
            <person name="Huson D.H."/>
            <person name="Kravitz S.A."/>
            <person name="Mouchard L."/>
            <person name="Reinert K."/>
            <person name="Remington K.A."/>
            <person name="Clark A.G."/>
            <person name="Waterman M.S."/>
            <person name="Eichler E.E."/>
            <person name="Adams M.D."/>
            <person name="Hunkapiller M.W."/>
            <person name="Myers E.W."/>
            <person name="Venter J.C."/>
        </authorList>
    </citation>
    <scope>NUCLEOTIDE SEQUENCE [LARGE SCALE GENOMIC DNA]</scope>
</reference>
<reference key="5">
    <citation type="journal article" date="2004" name="Genome Res.">
        <title>The status, quality, and expansion of the NIH full-length cDNA project: the Mammalian Gene Collection (MGC).</title>
        <authorList>
            <consortium name="The MGC Project Team"/>
        </authorList>
    </citation>
    <scope>NUCLEOTIDE SEQUENCE [LARGE SCALE MRNA] (ISOFORMS 1 AND 2)</scope>
    <source>
        <tissue>Brain</tissue>
        <tissue>Eye</tissue>
    </source>
</reference>
<dbReference type="EMBL" id="U90550">
    <property type="protein sequence ID" value="AAB53428.1"/>
    <property type="molecule type" value="mRNA"/>
</dbReference>
<dbReference type="EMBL" id="AK289883">
    <property type="protein sequence ID" value="BAF82572.1"/>
    <property type="molecule type" value="mRNA"/>
</dbReference>
<dbReference type="EMBL" id="AK293526">
    <property type="protein sequence ID" value="BAG57008.1"/>
    <property type="molecule type" value="mRNA"/>
</dbReference>
<dbReference type="EMBL" id="AK298570">
    <property type="protein sequence ID" value="BAG60763.1"/>
    <property type="molecule type" value="mRNA"/>
</dbReference>
<dbReference type="EMBL" id="AL021917">
    <property type="status" value="NOT_ANNOTATED_CDS"/>
    <property type="molecule type" value="Genomic_DNA"/>
</dbReference>
<dbReference type="EMBL" id="CH471087">
    <property type="protein sequence ID" value="EAW55565.1"/>
    <property type="molecule type" value="Genomic_DNA"/>
</dbReference>
<dbReference type="EMBL" id="BC014021">
    <property type="protein sequence ID" value="AAH14021.1"/>
    <property type="molecule type" value="mRNA"/>
</dbReference>
<dbReference type="EMBL" id="BC017497">
    <property type="protein sequence ID" value="AAH17497.1"/>
    <property type="molecule type" value="mRNA"/>
</dbReference>
<dbReference type="CCDS" id="CCDS4606.1">
    <molecule id="Q8WVV5-1"/>
</dbReference>
<dbReference type="CCDS" id="CCDS4607.1">
    <molecule id="Q8WVV5-4"/>
</dbReference>
<dbReference type="CCDS" id="CCDS56401.1">
    <molecule id="Q8WVV5-2"/>
</dbReference>
<dbReference type="CCDS" id="CCDS56402.1">
    <molecule id="Q8WVV5-3"/>
</dbReference>
<dbReference type="CCDS" id="CCDS56403.1">
    <molecule id="Q8WVV5-5"/>
</dbReference>
<dbReference type="RefSeq" id="NP_001184166.1">
    <molecule id="Q8WVV5-1"/>
    <property type="nucleotide sequence ID" value="NM_001197237.2"/>
</dbReference>
<dbReference type="RefSeq" id="NP_001184167.1">
    <molecule id="Q8WVV5-2"/>
    <property type="nucleotide sequence ID" value="NM_001197238.2"/>
</dbReference>
<dbReference type="RefSeq" id="NP_001184168.1">
    <molecule id="Q8WVV5-5"/>
    <property type="nucleotide sequence ID" value="NM_001197239.2"/>
</dbReference>
<dbReference type="RefSeq" id="NP_001184169.1">
    <molecule id="Q8WVV5-3"/>
    <property type="nucleotide sequence ID" value="NM_001197240.2"/>
</dbReference>
<dbReference type="RefSeq" id="NP_008926.2">
    <molecule id="Q8WVV5-1"/>
    <property type="nucleotide sequence ID" value="NM_006995.4"/>
</dbReference>
<dbReference type="RefSeq" id="NP_853509.1">
    <molecule id="Q8WVV5-4"/>
    <property type="nucleotide sequence ID" value="NM_181531.3"/>
</dbReference>
<dbReference type="RefSeq" id="XP_005248854.1">
    <molecule id="Q8WVV5-1"/>
    <property type="nucleotide sequence ID" value="XM_005248797.4"/>
</dbReference>
<dbReference type="RefSeq" id="XP_005248855.1">
    <molecule id="Q8WVV5-4"/>
    <property type="nucleotide sequence ID" value="XM_005248798.5"/>
</dbReference>
<dbReference type="RefSeq" id="XP_006715016.1">
    <property type="nucleotide sequence ID" value="XM_006714953.3"/>
</dbReference>
<dbReference type="RefSeq" id="XP_011512530.1">
    <molecule id="Q8WVV5-1"/>
    <property type="nucleotide sequence ID" value="XM_011514228.3"/>
</dbReference>
<dbReference type="RefSeq" id="XP_011512533.1">
    <molecule id="Q8WVV5-5"/>
    <property type="nucleotide sequence ID" value="XM_011514231.4"/>
</dbReference>
<dbReference type="RefSeq" id="XP_016865656.1">
    <property type="nucleotide sequence ID" value="XM_017010167.1"/>
</dbReference>
<dbReference type="RefSeq" id="XP_054209998.1">
    <molecule id="Q8WVV5-1"/>
    <property type="nucleotide sequence ID" value="XM_054354023.1"/>
</dbReference>
<dbReference type="RefSeq" id="XP_054209999.1">
    <molecule id="Q8WVV5-1"/>
    <property type="nucleotide sequence ID" value="XM_054354024.1"/>
</dbReference>
<dbReference type="RefSeq" id="XP_054210001.1">
    <molecule id="Q8WVV5-4"/>
    <property type="nucleotide sequence ID" value="XM_054354026.1"/>
</dbReference>
<dbReference type="RefSeq" id="XP_054210004.1">
    <molecule id="Q8WVV5-5"/>
    <property type="nucleotide sequence ID" value="XM_054354029.1"/>
</dbReference>
<dbReference type="PDB" id="8IH4">
    <property type="method" value="X-ray"/>
    <property type="resolution" value="2.12 A"/>
    <property type="chains" value="A/B=315-523"/>
</dbReference>
<dbReference type="PDBsum" id="8IH4"/>
<dbReference type="SMR" id="Q8WVV5"/>
<dbReference type="BioGRID" id="115658">
    <property type="interactions" value="91"/>
</dbReference>
<dbReference type="FunCoup" id="Q8WVV5">
    <property type="interactions" value="1117"/>
</dbReference>
<dbReference type="IntAct" id="Q8WVV5">
    <property type="interactions" value="83"/>
</dbReference>
<dbReference type="MINT" id="Q8WVV5"/>
<dbReference type="STRING" id="9606.ENSP00000349143"/>
<dbReference type="GlyCosmos" id="Q8WVV5">
    <property type="glycosylation" value="4 sites, No reported glycans"/>
</dbReference>
<dbReference type="GlyGen" id="Q8WVV5">
    <property type="glycosylation" value="4 sites, 2 N-linked glycans (2 sites)"/>
</dbReference>
<dbReference type="iPTMnet" id="Q8WVV5"/>
<dbReference type="PhosphoSitePlus" id="Q8WVV5"/>
<dbReference type="BioMuta" id="BTN2A2"/>
<dbReference type="DMDM" id="83288459"/>
<dbReference type="jPOST" id="Q8WVV5"/>
<dbReference type="MassIVE" id="Q8WVV5"/>
<dbReference type="PaxDb" id="9606-ENSP00000349143"/>
<dbReference type="PeptideAtlas" id="Q8WVV5"/>
<dbReference type="ProteomicsDB" id="20433"/>
<dbReference type="ProteomicsDB" id="74823">
    <molecule id="Q8WVV5-1"/>
</dbReference>
<dbReference type="ProteomicsDB" id="74824">
    <molecule id="Q8WVV5-2"/>
</dbReference>
<dbReference type="ProteomicsDB" id="74825">
    <molecule id="Q8WVV5-3"/>
</dbReference>
<dbReference type="ProteomicsDB" id="74826">
    <molecule id="Q8WVV5-4"/>
</dbReference>
<dbReference type="Pumba" id="Q8WVV5"/>
<dbReference type="ABCD" id="Q8WVV5">
    <property type="antibodies" value="7 sequenced antibodies"/>
</dbReference>
<dbReference type="Antibodypedia" id="44597">
    <property type="antibodies" value="129 antibodies from 20 providers"/>
</dbReference>
<dbReference type="DNASU" id="10385"/>
<dbReference type="Ensembl" id="ENST00000352867.6">
    <molecule id="Q8WVV5-4"/>
    <property type="protein sequence ID" value="ENSP00000337117.3"/>
    <property type="gene ID" value="ENSG00000124508.17"/>
</dbReference>
<dbReference type="Ensembl" id="ENST00000356709.9">
    <molecule id="Q8WVV5-1"/>
    <property type="protein sequence ID" value="ENSP00000349143.4"/>
    <property type="gene ID" value="ENSG00000124508.17"/>
</dbReference>
<dbReference type="Ensembl" id="ENST00000416795.6">
    <molecule id="Q8WVV5-1"/>
    <property type="protein sequence ID" value="ENSP00000399308.2"/>
    <property type="gene ID" value="ENSG00000124508.17"/>
</dbReference>
<dbReference type="Ensembl" id="ENST00000432533.6">
    <molecule id="Q8WVV5-3"/>
    <property type="protein sequence ID" value="ENSP00000394241.2"/>
    <property type="gene ID" value="ENSG00000124508.17"/>
</dbReference>
<dbReference type="Ensembl" id="ENST00000469230.5">
    <molecule id="Q8WVV5-2"/>
    <property type="protein sequence ID" value="ENSP00000417472.1"/>
    <property type="gene ID" value="ENSG00000124508.17"/>
</dbReference>
<dbReference type="Ensembl" id="ENST00000482536.5">
    <molecule id="Q8WVV5-5"/>
    <property type="protein sequence ID" value="ENSP00000419451.1"/>
    <property type="gene ID" value="ENSG00000124508.17"/>
</dbReference>
<dbReference type="GeneID" id="10385"/>
<dbReference type="KEGG" id="hsa:10385"/>
<dbReference type="MANE-Select" id="ENST00000356709.9">
    <property type="protein sequence ID" value="ENSP00000349143.4"/>
    <property type="RefSeq nucleotide sequence ID" value="NM_006995.5"/>
    <property type="RefSeq protein sequence ID" value="NP_008926.2"/>
</dbReference>
<dbReference type="UCSC" id="uc003nhq.4">
    <molecule id="Q8WVV5-1"/>
    <property type="organism name" value="human"/>
</dbReference>
<dbReference type="AGR" id="HGNC:1137"/>
<dbReference type="CTD" id="10385"/>
<dbReference type="DisGeNET" id="10385"/>
<dbReference type="GeneCards" id="BTN2A2"/>
<dbReference type="HGNC" id="HGNC:1137">
    <property type="gene designation" value="BTN2A2"/>
</dbReference>
<dbReference type="HPA" id="ENSG00000124508">
    <property type="expression patterns" value="Low tissue specificity"/>
</dbReference>
<dbReference type="MIM" id="613591">
    <property type="type" value="gene"/>
</dbReference>
<dbReference type="neXtProt" id="NX_Q8WVV5"/>
<dbReference type="OpenTargets" id="ENSG00000124508"/>
<dbReference type="PharmGKB" id="PA25457"/>
<dbReference type="VEuPathDB" id="HostDB:ENSG00000124508"/>
<dbReference type="eggNOG" id="ENOG502QSRZ">
    <property type="taxonomic scope" value="Eukaryota"/>
</dbReference>
<dbReference type="GeneTree" id="ENSGT00940000158017"/>
<dbReference type="HOGENOM" id="CLU_013137_22_2_1"/>
<dbReference type="InParanoid" id="Q8WVV5"/>
<dbReference type="OMA" id="KYQREKY"/>
<dbReference type="OrthoDB" id="9986391at2759"/>
<dbReference type="PAN-GO" id="Q8WVV5">
    <property type="GO annotations" value="4 GO annotations based on evolutionary models"/>
</dbReference>
<dbReference type="PhylomeDB" id="Q8WVV5"/>
<dbReference type="TreeFam" id="TF331083"/>
<dbReference type="PathwayCommons" id="Q8WVV5"/>
<dbReference type="Reactome" id="R-HSA-8851680">
    <property type="pathway name" value="Butyrophilin (BTN) family interactions"/>
</dbReference>
<dbReference type="SignaLink" id="Q8WVV5"/>
<dbReference type="BioGRID-ORCS" id="10385">
    <property type="hits" value="11 hits in 1153 CRISPR screens"/>
</dbReference>
<dbReference type="ChiTaRS" id="BTN2A2">
    <property type="organism name" value="human"/>
</dbReference>
<dbReference type="GeneWiki" id="Butyrophilin,_subfamily_2,_member_A2"/>
<dbReference type="GenomeRNAi" id="10385"/>
<dbReference type="Pharos" id="Q8WVV5">
    <property type="development level" value="Tbio"/>
</dbReference>
<dbReference type="PRO" id="PR:Q8WVV5"/>
<dbReference type="Proteomes" id="UP000005640">
    <property type="component" value="Chromosome 6"/>
</dbReference>
<dbReference type="RNAct" id="Q8WVV5">
    <property type="molecule type" value="protein"/>
</dbReference>
<dbReference type="Bgee" id="ENSG00000124508">
    <property type="expression patterns" value="Expressed in epithelium of nasopharynx and 182 other cell types or tissues"/>
</dbReference>
<dbReference type="ExpressionAtlas" id="Q8WVV5">
    <property type="expression patterns" value="baseline and differential"/>
</dbReference>
<dbReference type="GO" id="GO:0009897">
    <property type="term" value="C:external side of plasma membrane"/>
    <property type="evidence" value="ECO:0000318"/>
    <property type="project" value="GO_Central"/>
</dbReference>
<dbReference type="GO" id="GO:0005886">
    <property type="term" value="C:plasma membrane"/>
    <property type="evidence" value="ECO:0000304"/>
    <property type="project" value="Reactome"/>
</dbReference>
<dbReference type="GO" id="GO:0005102">
    <property type="term" value="F:signaling receptor binding"/>
    <property type="evidence" value="ECO:0000318"/>
    <property type="project" value="GO_Central"/>
</dbReference>
<dbReference type="GO" id="GO:0070371">
    <property type="term" value="P:ERK1 and ERK2 cascade"/>
    <property type="evidence" value="ECO:0007669"/>
    <property type="project" value="Ensembl"/>
</dbReference>
<dbReference type="GO" id="GO:0000082">
    <property type="term" value="P:G1/S transition of mitotic cell cycle"/>
    <property type="evidence" value="ECO:0007669"/>
    <property type="project" value="Ensembl"/>
</dbReference>
<dbReference type="GO" id="GO:0046007">
    <property type="term" value="P:negative regulation of activated T cell proliferation"/>
    <property type="evidence" value="ECO:0000250"/>
    <property type="project" value="UniProtKB"/>
</dbReference>
<dbReference type="GO" id="GO:0001818">
    <property type="term" value="P:negative regulation of cytokine production"/>
    <property type="evidence" value="ECO:0000250"/>
    <property type="project" value="UniProtKB"/>
</dbReference>
<dbReference type="GO" id="GO:0070373">
    <property type="term" value="P:negative regulation of ERK1 and ERK2 cascade"/>
    <property type="evidence" value="ECO:0007669"/>
    <property type="project" value="Ensembl"/>
</dbReference>
<dbReference type="GO" id="GO:2000134">
    <property type="term" value="P:negative regulation of G1/S transition of mitotic cell cycle"/>
    <property type="evidence" value="ECO:0007669"/>
    <property type="project" value="Ensembl"/>
</dbReference>
<dbReference type="GO" id="GO:0051898">
    <property type="term" value="P:negative regulation of phosphatidylinositol 3-kinase/protein kinase B signal transduction"/>
    <property type="evidence" value="ECO:0007669"/>
    <property type="project" value="Ensembl"/>
</dbReference>
<dbReference type="GO" id="GO:0050860">
    <property type="term" value="P:negative regulation of T cell receptor signaling pathway"/>
    <property type="evidence" value="ECO:0007669"/>
    <property type="project" value="Ensembl"/>
</dbReference>
<dbReference type="GO" id="GO:0043491">
    <property type="term" value="P:phosphatidylinositol 3-kinase/protein kinase B signal transduction"/>
    <property type="evidence" value="ECO:0007669"/>
    <property type="project" value="Ensembl"/>
</dbReference>
<dbReference type="GO" id="GO:0045591">
    <property type="term" value="P:positive regulation of regulatory T cell differentiation"/>
    <property type="evidence" value="ECO:0007669"/>
    <property type="project" value="Ensembl"/>
</dbReference>
<dbReference type="GO" id="GO:0001817">
    <property type="term" value="P:regulation of cytokine production"/>
    <property type="evidence" value="ECO:0000318"/>
    <property type="project" value="GO_Central"/>
</dbReference>
<dbReference type="GO" id="GO:0050852">
    <property type="term" value="P:T cell receptor signaling pathway"/>
    <property type="evidence" value="ECO:0000318"/>
    <property type="project" value="GO_Central"/>
</dbReference>
<dbReference type="CDD" id="cd05713">
    <property type="entry name" value="IgV_MOG_like"/>
    <property type="match status" value="1"/>
</dbReference>
<dbReference type="CDD" id="cd15819">
    <property type="entry name" value="SPRY_PRY_BTN1_2"/>
    <property type="match status" value="1"/>
</dbReference>
<dbReference type="FunFam" id="2.60.120.920:FF:000004">
    <property type="entry name" value="Butyrophilin subfamily 1 member A1"/>
    <property type="match status" value="1"/>
</dbReference>
<dbReference type="FunFam" id="2.60.40.10:FF:000088">
    <property type="entry name" value="Butyrophilin subfamily 1 member A1"/>
    <property type="match status" value="1"/>
</dbReference>
<dbReference type="FunFam" id="2.60.40.10:FF:000208">
    <property type="entry name" value="Butyrophilin subfamily 1 member A1"/>
    <property type="match status" value="1"/>
</dbReference>
<dbReference type="Gene3D" id="2.60.120.920">
    <property type="match status" value="1"/>
</dbReference>
<dbReference type="Gene3D" id="2.60.40.10">
    <property type="entry name" value="Immunoglobulins"/>
    <property type="match status" value="2"/>
</dbReference>
<dbReference type="InterPro" id="IPR001870">
    <property type="entry name" value="B30.2/SPRY"/>
</dbReference>
<dbReference type="InterPro" id="IPR043136">
    <property type="entry name" value="B30.2/SPRY_sf"/>
</dbReference>
<dbReference type="InterPro" id="IPR053896">
    <property type="entry name" value="BTN3A2-like_Ig-C"/>
</dbReference>
<dbReference type="InterPro" id="IPR003879">
    <property type="entry name" value="Butyrophylin_SPRY"/>
</dbReference>
<dbReference type="InterPro" id="IPR013320">
    <property type="entry name" value="ConA-like_dom_sf"/>
</dbReference>
<dbReference type="InterPro" id="IPR007110">
    <property type="entry name" value="Ig-like_dom"/>
</dbReference>
<dbReference type="InterPro" id="IPR036179">
    <property type="entry name" value="Ig-like_dom_sf"/>
</dbReference>
<dbReference type="InterPro" id="IPR013783">
    <property type="entry name" value="Ig-like_fold"/>
</dbReference>
<dbReference type="InterPro" id="IPR003599">
    <property type="entry name" value="Ig_sub"/>
</dbReference>
<dbReference type="InterPro" id="IPR013106">
    <property type="entry name" value="Ig_V-set"/>
</dbReference>
<dbReference type="InterPro" id="IPR050504">
    <property type="entry name" value="IgSF_BTN/MOG"/>
</dbReference>
<dbReference type="InterPro" id="IPR006574">
    <property type="entry name" value="PRY"/>
</dbReference>
<dbReference type="InterPro" id="IPR037958">
    <property type="entry name" value="SPRY/PRY_BTN1/2"/>
</dbReference>
<dbReference type="InterPro" id="IPR003877">
    <property type="entry name" value="SPRY_dom"/>
</dbReference>
<dbReference type="PANTHER" id="PTHR24100">
    <property type="entry name" value="BUTYROPHILIN"/>
    <property type="match status" value="1"/>
</dbReference>
<dbReference type="PANTHER" id="PTHR24100:SF139">
    <property type="entry name" value="BUTYROPHILIN SUBFAMILY 2 MEMBER A2"/>
    <property type="match status" value="1"/>
</dbReference>
<dbReference type="Pfam" id="PF22705">
    <property type="entry name" value="C2-set_3"/>
    <property type="match status" value="1"/>
</dbReference>
<dbReference type="Pfam" id="PF13765">
    <property type="entry name" value="PRY"/>
    <property type="match status" value="1"/>
</dbReference>
<dbReference type="Pfam" id="PF00622">
    <property type="entry name" value="SPRY"/>
    <property type="match status" value="1"/>
</dbReference>
<dbReference type="Pfam" id="PF07686">
    <property type="entry name" value="V-set"/>
    <property type="match status" value="1"/>
</dbReference>
<dbReference type="PRINTS" id="PR01407">
    <property type="entry name" value="BUTYPHLNCDUF"/>
</dbReference>
<dbReference type="SMART" id="SM00409">
    <property type="entry name" value="IG"/>
    <property type="match status" value="1"/>
</dbReference>
<dbReference type="SMART" id="SM00406">
    <property type="entry name" value="IGv"/>
    <property type="match status" value="1"/>
</dbReference>
<dbReference type="SMART" id="SM00589">
    <property type="entry name" value="PRY"/>
    <property type="match status" value="1"/>
</dbReference>
<dbReference type="SMART" id="SM00449">
    <property type="entry name" value="SPRY"/>
    <property type="match status" value="1"/>
</dbReference>
<dbReference type="SUPFAM" id="SSF49899">
    <property type="entry name" value="Concanavalin A-like lectins/glucanases"/>
    <property type="match status" value="1"/>
</dbReference>
<dbReference type="SUPFAM" id="SSF48726">
    <property type="entry name" value="Immunoglobulin"/>
    <property type="match status" value="2"/>
</dbReference>
<dbReference type="PROSITE" id="PS50188">
    <property type="entry name" value="B302_SPRY"/>
    <property type="match status" value="1"/>
</dbReference>
<dbReference type="PROSITE" id="PS50835">
    <property type="entry name" value="IG_LIKE"/>
    <property type="match status" value="1"/>
</dbReference>
<sequence length="523" mass="59070">MEPAAALHFSLPASLLLLLLLLLLSLCALVSAQFTVVGPANPILAMVGENTTLRCHLSPEKNAEDMEVRWFRSQFSPAVFVYKGGRERTEEQMEEYRGRITFVSKDINRGSVALVIHNVTAQENGIYRCYFQEGRSYDEAILRLVVAGLGSKPLIEIKAQEDGSIWLECISGGWYPEPLTVWRDPYGEVVPALKEVSIADADGLFMVTTAVIIRDKYVRNVSCSVNNTLLGQEKETVIFIPESFMPSASPWMVALAVILTASPWMVSMTVILAVFIIFMAVSICCIKKLQREKKILSGEKKVEQEEKEIAQQLQEELRWRRTFLHAADVVLDPDTAHPELFLSEDRRSVRRGPYRQRVPDNPERFDSQPCVLGWESFASGKHYWEVEVENVMVWTVGVCRHSVERKGEVLLIPQNGFWTLEMFGNQYRALSSPERILPLKESLCRVGVFLDYEAGDVSFYNMRDRSHIYTCPRSAFTVPVRPFFRLGSDDSPIFICPALTGASGVMVPEEGLKLHRVGTHQSL</sequence>
<organism>
    <name type="scientific">Homo sapiens</name>
    <name type="common">Human</name>
    <dbReference type="NCBI Taxonomy" id="9606"/>
    <lineage>
        <taxon>Eukaryota</taxon>
        <taxon>Metazoa</taxon>
        <taxon>Chordata</taxon>
        <taxon>Craniata</taxon>
        <taxon>Vertebrata</taxon>
        <taxon>Euteleostomi</taxon>
        <taxon>Mammalia</taxon>
        <taxon>Eutheria</taxon>
        <taxon>Euarchontoglires</taxon>
        <taxon>Primates</taxon>
        <taxon>Haplorrhini</taxon>
        <taxon>Catarrhini</taxon>
        <taxon>Hominidae</taxon>
        <taxon>Homo</taxon>
    </lineage>
</organism>
<evidence type="ECO:0000250" key="1"/>
<evidence type="ECO:0000255" key="2"/>
<evidence type="ECO:0000255" key="3">
    <source>
        <dbReference type="PROSITE-ProRule" id="PRU00114"/>
    </source>
</evidence>
<evidence type="ECO:0000255" key="4">
    <source>
        <dbReference type="PROSITE-ProRule" id="PRU00548"/>
    </source>
</evidence>
<evidence type="ECO:0000269" key="5">
    <source>
    </source>
</evidence>
<evidence type="ECO:0000303" key="6">
    <source>
    </source>
</evidence>
<evidence type="ECO:0000303" key="7">
    <source>
    </source>
</evidence>
<evidence type="ECO:0000305" key="8"/>
<evidence type="ECO:0007829" key="9">
    <source>
        <dbReference type="PDB" id="8IH4"/>
    </source>
</evidence>
<proteinExistence type="evidence at protein level"/>
<accession>Q8WVV5</accession>
<accession>A6NM84</accession>
<accession>B4DE97</accession>
<accession>B4DQ01</accession>
<accession>E9PH07</accession>
<accession>O00480</accession>
<comment type="function">
    <text evidence="1">Inhibits the proliferation of CD4 and CD8 T-cells activated by anti-CD3 antibodies, T-cell metabolism and IL2 and IFNG secretion.</text>
</comment>
<comment type="interaction">
    <interactant intactId="EBI-8648738">
        <id>Q8WVV5</id>
    </interactant>
    <interactant intactId="EBI-13059134">
        <id>Q13520</id>
        <label>AQP6</label>
    </interactant>
    <organismsDiffer>false</organismsDiffer>
    <experiments>3</experiments>
</comment>
<comment type="interaction">
    <interactant intactId="EBI-8648738">
        <id>Q8WVV5</id>
    </interactant>
    <interactant intactId="EBI-700794">
        <id>Q13323</id>
        <label>BIK</label>
    </interactant>
    <organismsDiffer>false</organismsDiffer>
    <experiments>3</experiments>
</comment>
<comment type="interaction">
    <interactant intactId="EBI-8648738">
        <id>Q8WVV5</id>
    </interactant>
    <interactant intactId="EBI-6657396">
        <id>P19397</id>
        <label>CD53</label>
    </interactant>
    <organismsDiffer>false</organismsDiffer>
    <experiments>3</experiments>
</comment>
<comment type="interaction">
    <interactant intactId="EBI-8648738">
        <id>Q8WVV5</id>
    </interactant>
    <interactant intactId="EBI-7797864">
        <id>P11912</id>
        <label>CD79A</label>
    </interactant>
    <organismsDiffer>false</organismsDiffer>
    <experiments>3</experiments>
</comment>
<comment type="interaction">
    <interactant intactId="EBI-8648738">
        <id>Q8WVV5</id>
    </interactant>
    <interactant intactId="EBI-1045797">
        <id>Q8N5K1</id>
        <label>CISD2</label>
    </interactant>
    <organismsDiffer>false</organismsDiffer>
    <experiments>3</experiments>
</comment>
<comment type="interaction">
    <interactant intactId="EBI-8648738">
        <id>Q8WVV5</id>
    </interactant>
    <interactant intactId="EBI-3915253">
        <id>Q15125</id>
        <label>EBP</label>
    </interactant>
    <organismsDiffer>false</organismsDiffer>
    <experiments>3</experiments>
</comment>
<comment type="interaction">
    <interactant intactId="EBI-8648738">
        <id>Q8WVV5</id>
    </interactant>
    <interactant intactId="EBI-18535450">
        <id>Q9GZR5</id>
        <label>ELOVL4</label>
    </interactant>
    <organismsDiffer>false</organismsDiffer>
    <experiments>3</experiments>
</comment>
<comment type="interaction">
    <interactant intactId="EBI-8648738">
        <id>Q8WVV5</id>
    </interactant>
    <interactant intactId="EBI-4319440">
        <id>P54849</id>
        <label>EMP1</label>
    </interactant>
    <organismsDiffer>false</organismsDiffer>
    <experiments>3</experiments>
</comment>
<comment type="interaction">
    <interactant intactId="EBI-8648738">
        <id>Q8WVV5</id>
    </interactant>
    <interactant intactId="EBI-781551">
        <id>Q9Y282</id>
        <label>ERGIC3</label>
    </interactant>
    <organismsDiffer>false</organismsDiffer>
    <experiments>3</experiments>
</comment>
<comment type="interaction">
    <interactant intactId="EBI-8648738">
        <id>Q8WVV5</id>
    </interactant>
    <interactant intactId="EBI-17640610">
        <id>P34910-2</id>
        <label>EVI2B</label>
    </interactant>
    <organismsDiffer>false</organismsDiffer>
    <experiments>3</experiments>
</comment>
<comment type="interaction">
    <interactant intactId="EBI-8648738">
        <id>Q8WVV5</id>
    </interactant>
    <interactant intactId="EBI-18304435">
        <id>Q5JX71</id>
        <label>FAM209A</label>
    </interactant>
    <organismsDiffer>false</organismsDiffer>
    <experiments>3</experiments>
</comment>
<comment type="interaction">
    <interactant intactId="EBI-8648738">
        <id>Q8WVV5</id>
    </interactant>
    <interactant intactId="EBI-743099">
        <id>Q969F0</id>
        <label>FATE1</label>
    </interactant>
    <organismsDiffer>false</organismsDiffer>
    <experiments>3</experiments>
</comment>
<comment type="interaction">
    <interactant intactId="EBI-8648738">
        <id>Q8WVV5</id>
    </interactant>
    <interactant intactId="EBI-2833872">
        <id>O15552</id>
        <label>FFAR2</label>
    </interactant>
    <organismsDiffer>false</organismsDiffer>
    <experiments>3</experiments>
</comment>
<comment type="interaction">
    <interactant intactId="EBI-8648738">
        <id>Q8WVV5</id>
    </interactant>
    <interactant intactId="EBI-3908586">
        <id>O75712</id>
        <label>GJB3</label>
    </interactant>
    <organismsDiffer>false</organismsDiffer>
    <experiments>3</experiments>
</comment>
<comment type="interaction">
    <interactant intactId="EBI-8648738">
        <id>Q8WVV5</id>
    </interactant>
    <interactant intactId="EBI-18076404">
        <id>O15529</id>
        <label>GPR42</label>
    </interactant>
    <organismsDiffer>false</organismsDiffer>
    <experiments>3</experiments>
</comment>
<comment type="interaction">
    <interactant intactId="EBI-8648738">
        <id>Q8WVV5</id>
    </interactant>
    <interactant intactId="EBI-13067820">
        <id>Q9NZD1</id>
        <label>GPRC5D</label>
    </interactant>
    <organismsDiffer>false</organismsDiffer>
    <experiments>3</experiments>
</comment>
<comment type="interaction">
    <interactant intactId="EBI-8648738">
        <id>Q8WVV5</id>
    </interactant>
    <interactant intactId="EBI-11721746">
        <id>Q8TED1</id>
        <label>GPX8</label>
    </interactant>
    <organismsDiffer>false</organismsDiffer>
    <experiments>3</experiments>
</comment>
<comment type="interaction">
    <interactant intactId="EBI-8648738">
        <id>Q8WVV5</id>
    </interactant>
    <interactant intactId="EBI-3918847">
        <id>Q9H2F3</id>
        <label>HSD3B7</label>
    </interactant>
    <organismsDiffer>false</organismsDiffer>
    <experiments>3</experiments>
</comment>
<comment type="interaction">
    <interactant intactId="EBI-8648738">
        <id>Q8WVV5</id>
    </interactant>
    <interactant intactId="EBI-8632435">
        <id>P43628</id>
        <label>KIR2DL3</label>
    </interactant>
    <organismsDiffer>false</organismsDiffer>
    <experiments>3</experiments>
</comment>
<comment type="interaction">
    <interactant intactId="EBI-8648738">
        <id>Q8WVV5</id>
    </interactant>
    <interactant intactId="EBI-2820517">
        <id>Q8TAF8</id>
        <label>LHFPL5</label>
    </interactant>
    <organismsDiffer>false</organismsDiffer>
    <experiments>3</experiments>
</comment>
<comment type="interaction">
    <interactant intactId="EBI-8648738">
        <id>Q8WVV5</id>
    </interactant>
    <interactant intactId="EBI-1045440">
        <id>Q9HC36</id>
        <label>MRM3</label>
    </interactant>
    <organismsDiffer>false</organismsDiffer>
    <experiments>3</experiments>
</comment>
<comment type="interaction">
    <interactant intactId="EBI-8648738">
        <id>Q8WVV5</id>
    </interactant>
    <interactant intactId="EBI-17263240">
        <id>P15941-11</id>
        <label>MUC1</label>
    </interactant>
    <organismsDiffer>false</organismsDiffer>
    <experiments>3</experiments>
</comment>
<comment type="interaction">
    <interactant intactId="EBI-8648738">
        <id>Q8WVV5</id>
    </interactant>
    <interactant intactId="EBI-594836">
        <id>O00623</id>
        <label>PEX12</label>
    </interactant>
    <organismsDiffer>false</organismsDiffer>
    <experiments>3</experiments>
</comment>
<comment type="interaction">
    <interactant intactId="EBI-8648738">
        <id>Q8WVV5</id>
    </interactant>
    <interactant intactId="EBI-348380">
        <id>P25788</id>
        <label>PSMA3</label>
    </interactant>
    <organismsDiffer>false</organismsDiffer>
    <experiments>3</experiments>
</comment>
<comment type="interaction">
    <interactant intactId="EBI-8648738">
        <id>Q8WVV5</id>
    </interactant>
    <interactant intactId="EBI-2855401">
        <id>Q9BY50</id>
        <label>SEC11C</label>
    </interactant>
    <organismsDiffer>false</organismsDiffer>
    <experiments>3</experiments>
</comment>
<comment type="interaction">
    <interactant intactId="EBI-8648738">
        <id>Q8WVV5</id>
    </interactant>
    <interactant intactId="EBI-18159983">
        <id>Q3KNW5</id>
        <label>SLC10A6</label>
    </interactant>
    <organismsDiffer>false</organismsDiffer>
    <experiments>3</experiments>
</comment>
<comment type="interaction">
    <interactant intactId="EBI-8648738">
        <id>Q8WVV5</id>
    </interactant>
    <interactant intactId="EBI-19141793">
        <id>Q13336-2</id>
        <label>SLC14A1</label>
    </interactant>
    <organismsDiffer>false</organismsDiffer>
    <experiments>3</experiments>
</comment>
<comment type="interaction">
    <interactant intactId="EBI-8648738">
        <id>Q8WVV5</id>
    </interactant>
    <interactant intactId="EBI-359038">
        <id>P43003</id>
        <label>SLC1A3</label>
    </interactant>
    <organismsDiffer>false</organismsDiffer>
    <experiments>3</experiments>
</comment>
<comment type="interaction">
    <interactant intactId="EBI-8648738">
        <id>Q8WVV5</id>
    </interactant>
    <interactant intactId="EBI-13918058">
        <id>O14863</id>
        <label>SLC30A4</label>
    </interactant>
    <organismsDiffer>false</organismsDiffer>
    <experiments>3</experiments>
</comment>
<comment type="interaction">
    <interactant intactId="EBI-8648738">
        <id>Q8WVV5</id>
    </interactant>
    <interactant intactId="EBI-12898013">
        <id>Q9NP94</id>
        <label>SLC39A2</label>
    </interactant>
    <organismsDiffer>false</organismsDiffer>
    <experiments>3</experiments>
</comment>
<comment type="interaction">
    <interactant intactId="EBI-8648738">
        <id>Q8WVV5</id>
    </interactant>
    <interactant intactId="EBI-17848320">
        <id>Q6ZMD2-2</id>
        <label>SPNS3</label>
    </interactant>
    <organismsDiffer>false</organismsDiffer>
    <experiments>3</experiments>
</comment>
<comment type="interaction">
    <interactant intactId="EBI-8648738">
        <id>Q8WVV5</id>
    </interactant>
    <interactant intactId="EBI-712466">
        <id>Q16623</id>
        <label>STX1A</label>
    </interactant>
    <organismsDiffer>false</organismsDiffer>
    <experiments>3</experiments>
</comment>
<comment type="interaction">
    <interactant intactId="EBI-8648738">
        <id>Q8WVV5</id>
    </interactant>
    <interactant intactId="EBI-524909">
        <id>P21579</id>
        <label>SYT1</label>
    </interactant>
    <organismsDiffer>false</organismsDiffer>
    <experiments>3</experiments>
</comment>
<comment type="interaction">
    <interactant intactId="EBI-8648738">
        <id>Q8WVV5</id>
    </interactant>
    <interactant intactId="EBI-8638294">
        <id>Q9NUH8</id>
        <label>TMEM14B</label>
    </interactant>
    <organismsDiffer>false</organismsDiffer>
    <experiments>3</experiments>
</comment>
<comment type="interaction">
    <interactant intactId="EBI-8648738">
        <id>Q8WVV5</id>
    </interactant>
    <interactant intactId="EBI-11724423">
        <id>Q7Z7N9</id>
        <label>TMEM179B</label>
    </interactant>
    <organismsDiffer>false</organismsDiffer>
    <experiments>3</experiments>
</comment>
<comment type="interaction">
    <interactant intactId="EBI-8648738">
        <id>Q8WVV5</id>
    </interactant>
    <interactant intactId="EBI-10982110">
        <id>Q96Q45-2</id>
        <label>TMEM237</label>
    </interactant>
    <organismsDiffer>false</organismsDiffer>
    <experiments>5</experiments>
</comment>
<comment type="interaction">
    <interactant intactId="EBI-8648738">
        <id>Q8WVV5</id>
    </interactant>
    <interactant intactId="EBI-18178701">
        <id>Q4KMG9</id>
        <label>TMEM52B</label>
    </interactant>
    <organismsDiffer>false</organismsDiffer>
    <experiments>3</experiments>
</comment>
<comment type="interaction">
    <interactant intactId="EBI-8648738">
        <id>Q8WVV5</id>
    </interactant>
    <interactant intactId="EBI-6447886">
        <id>Q9Y320</id>
        <label>TMX2</label>
    </interactant>
    <organismsDiffer>false</organismsDiffer>
    <experiments>3</experiments>
</comment>
<comment type="subcellular location">
    <subcellularLocation>
        <location evidence="8">Membrane</location>
        <topology evidence="8">Single-pass type I membrane protein</topology>
    </subcellularLocation>
</comment>
<comment type="alternative products">
    <event type="alternative splicing"/>
    <isoform>
        <id>Q8WVV5-1</id>
        <name>1</name>
        <sequence type="displayed"/>
    </isoform>
    <isoform>
        <id>Q8WVV5-2</id>
        <name>2</name>
        <sequence type="described" ref="VSP_012712 VSP_012713"/>
    </isoform>
    <isoform>
        <id>Q8WVV5-3</id>
        <name>3</name>
        <sequence type="described" ref="VSP_043562 VSP_043563 VSP_043564"/>
    </isoform>
    <isoform>
        <id>Q8WVV5-4</id>
        <name>4</name>
        <sequence type="described" ref="VSP_043561"/>
    </isoform>
    <isoform>
        <id>Q8WVV5-5</id>
        <name>5</name>
        <sequence type="described" ref="VSP_044861"/>
    </isoform>
</comment>
<comment type="tissue specificity">
    <text evidence="5">Highly expressed in brain, bone marrow, small intestine, muscle, spleen and pancreas. Moderate expression was seen in lung, liver and kidney.</text>
</comment>
<comment type="PTM">
    <text evidence="1">N-glycosylated.</text>
</comment>
<comment type="similarity">
    <text evidence="8">Belongs to the immunoglobulin superfamily. BTN/MOG family.</text>
</comment>
<gene>
    <name type="primary">BTN2A2</name>
    <name type="synonym">BT2.2</name>
    <name type="synonym">BTF2</name>
</gene>
<name>BT2A2_HUMAN</name>
<keyword id="KW-0002">3D-structure</keyword>
<keyword id="KW-0025">Alternative splicing</keyword>
<keyword id="KW-0175">Coiled coil</keyword>
<keyword id="KW-1015">Disulfide bond</keyword>
<keyword id="KW-0325">Glycoprotein</keyword>
<keyword id="KW-0393">Immunoglobulin domain</keyword>
<keyword id="KW-0472">Membrane</keyword>
<keyword id="KW-1267">Proteomics identification</keyword>
<keyword id="KW-1185">Reference proteome</keyword>
<keyword id="KW-0732">Signal</keyword>
<keyword id="KW-0812">Transmembrane</keyword>
<keyword id="KW-1133">Transmembrane helix</keyword>
<feature type="signal peptide" evidence="2">
    <location>
        <begin position="1"/>
        <end position="32"/>
    </location>
</feature>
<feature type="chain" id="PRO_0000014530" description="Butyrophilin subfamily 2 member A2">
    <location>
        <begin position="33"/>
        <end position="523"/>
    </location>
</feature>
<feature type="topological domain" description="Extracellular" evidence="2">
    <location>
        <begin position="33"/>
        <end position="265"/>
    </location>
</feature>
<feature type="transmembrane region" description="Helical" evidence="2">
    <location>
        <begin position="266"/>
        <end position="286"/>
    </location>
</feature>
<feature type="topological domain" description="Cytoplasmic" evidence="2">
    <location>
        <begin position="287"/>
        <end position="523"/>
    </location>
</feature>
<feature type="domain" description="Ig-like V-type">
    <location>
        <begin position="34"/>
        <end position="145"/>
    </location>
</feature>
<feature type="domain" description="Ig-like C2-type">
    <location>
        <begin position="153"/>
        <end position="234"/>
    </location>
</feature>
<feature type="domain" description="B30.2/SPRY" evidence="4">
    <location>
        <begin position="309"/>
        <end position="502"/>
    </location>
</feature>
<feature type="coiled-coil region" evidence="2">
    <location>
        <begin position="286"/>
        <end position="321"/>
    </location>
</feature>
<feature type="glycosylation site" description="N-linked (GlcNAc...) asparagine" evidence="2">
    <location>
        <position position="50"/>
    </location>
</feature>
<feature type="glycosylation site" description="N-linked (GlcNAc...) asparagine" evidence="2">
    <location>
        <position position="118"/>
    </location>
</feature>
<feature type="glycosylation site" description="N-linked (GlcNAc...) asparagine" evidence="2">
    <location>
        <position position="220"/>
    </location>
</feature>
<feature type="glycosylation site" description="N-linked (GlcNAc...) asparagine" evidence="2">
    <location>
        <position position="226"/>
    </location>
</feature>
<feature type="disulfide bond" evidence="3">
    <location>
        <begin position="55"/>
        <end position="129"/>
    </location>
</feature>
<feature type="splice variant" id="VSP_044861" description="In isoform 5." evidence="6">
    <location>
        <begin position="32"/>
        <end position="241"/>
    </location>
</feature>
<feature type="splice variant" id="VSP_043561" description="In isoform 4." evidence="6">
    <location>
        <begin position="32"/>
        <end position="147"/>
    </location>
</feature>
<feature type="splice variant" id="VSP_043562" description="In isoform 3." evidence="6">
    <location>
        <begin position="148"/>
        <end position="241"/>
    </location>
</feature>
<feature type="splice variant" id="VSP_043563" description="In isoform 3." evidence="6">
    <original>ADVVLDPDTAHPELFLSEDRRSVR</original>
    <variation>GYELPGIRGPSWKRPLHGEPPSAF</variation>
    <location>
        <begin position="327"/>
        <end position="350"/>
    </location>
</feature>
<feature type="splice variant" id="VSP_012712" description="In isoform 2." evidence="7">
    <original>ADVVLDPDTA</original>
    <variation>DVNLTGLRNT</variation>
    <location>
        <begin position="327"/>
        <end position="336"/>
    </location>
</feature>
<feature type="splice variant" id="VSP_012713" description="In isoform 2." evidence="7">
    <location>
        <begin position="337"/>
        <end position="523"/>
    </location>
</feature>
<feature type="splice variant" id="VSP_043564" description="In isoform 3." evidence="6">
    <location>
        <begin position="351"/>
        <end position="523"/>
    </location>
</feature>
<feature type="sequence variant" id="VAR_049829" description="In dbSNP:rs16891646.">
    <original>P</original>
    <variation>S</variation>
    <location>
        <position position="479"/>
    </location>
</feature>
<feature type="sequence conflict" description="In Ref. 2; BAG57008." evidence="8" ref="2">
    <original>S</original>
    <variation>P</variation>
    <location>
        <position position="243"/>
    </location>
</feature>
<feature type="strand" evidence="9">
    <location>
        <begin position="323"/>
        <end position="326"/>
    </location>
</feature>
<feature type="turn" evidence="9">
    <location>
        <begin position="333"/>
        <end position="335"/>
    </location>
</feature>
<feature type="strand" evidence="9">
    <location>
        <begin position="340"/>
        <end position="342"/>
    </location>
</feature>
<feature type="strand" evidence="9">
    <location>
        <begin position="346"/>
        <end position="351"/>
    </location>
</feature>
<feature type="strand" evidence="9">
    <location>
        <begin position="366"/>
        <end position="368"/>
    </location>
</feature>
<feature type="strand" evidence="9">
    <location>
        <begin position="370"/>
        <end position="374"/>
    </location>
</feature>
<feature type="strand" evidence="9">
    <location>
        <begin position="377"/>
        <end position="387"/>
    </location>
</feature>
<feature type="strand" evidence="9">
    <location>
        <begin position="392"/>
        <end position="400"/>
    </location>
</feature>
<feature type="helix" evidence="9">
    <location>
        <begin position="413"/>
        <end position="415"/>
    </location>
</feature>
<feature type="strand" evidence="9">
    <location>
        <begin position="417"/>
        <end position="423"/>
    </location>
</feature>
<feature type="strand" evidence="9">
    <location>
        <begin position="426"/>
        <end position="429"/>
    </location>
</feature>
<feature type="strand" evidence="9">
    <location>
        <begin position="444"/>
        <end position="451"/>
    </location>
</feature>
<feature type="turn" evidence="9">
    <location>
        <begin position="452"/>
        <end position="455"/>
    </location>
</feature>
<feature type="strand" evidence="9">
    <location>
        <begin position="456"/>
        <end position="461"/>
    </location>
</feature>
<feature type="turn" evidence="9">
    <location>
        <begin position="462"/>
        <end position="465"/>
    </location>
</feature>
<feature type="strand" evidence="9">
    <location>
        <begin position="466"/>
        <end position="470"/>
    </location>
</feature>
<feature type="strand" evidence="9">
    <location>
        <begin position="480"/>
        <end position="486"/>
    </location>
</feature>
<feature type="strand" evidence="9">
    <location>
        <begin position="493"/>
        <end position="495"/>
    </location>
</feature>
<feature type="turn" evidence="9">
    <location>
        <begin position="501"/>
        <end position="504"/>
    </location>
</feature>
<feature type="strand" evidence="9">
    <location>
        <begin position="512"/>
        <end position="514"/>
    </location>
</feature>
<protein>
    <recommendedName>
        <fullName>Butyrophilin subfamily 2 member A2</fullName>
    </recommendedName>
</protein>